<evidence type="ECO:0000250" key="1"/>
<evidence type="ECO:0000250" key="2">
    <source>
        <dbReference type="UniProtKB" id="P68831"/>
    </source>
</evidence>
<evidence type="ECO:0000305" key="3"/>
<protein>
    <recommendedName>
        <fullName>Protein B2</fullName>
    </recommendedName>
</protein>
<accession>P68830</accession>
<accession>P29100</accession>
<accession>Q89618</accession>
<accession>Q96632</accession>
<proteinExistence type="evidence at transcript level"/>
<sequence>MPSKLALIQELPDRIQTAVEAAMGMSYQDAPNNVRRDLDNLHACLNKAKLTVSRMVTSLLEKPSVVAYLEGKAPEEAKPTLEERLRKLELSHSLPTTGSDPPPAKL</sequence>
<organismHost>
    <name type="scientific">Heteronychus arator</name>
    <name type="common">African black beetle</name>
    <dbReference type="NCBI Taxonomy" id="295550"/>
</organismHost>
<comment type="function">
    <text evidence="2">Binds double-strand RNA (dsRNA) with high affinity. Suppresses the host RNA silencing-based antiviral response.</text>
</comment>
<comment type="subunit">
    <text evidence="2">Homodimer. Interacts with RNA-directed RNA polymerase.</text>
</comment>
<comment type="subcellular location">
    <subcellularLocation>
        <location evidence="2">Host mitochondrion</location>
    </subcellularLocation>
</comment>
<comment type="developmental stage">
    <text>Expressed at high levels early in the viral replication cycle.</text>
</comment>
<comment type="domain">
    <text evidence="2">The dsRNA-binding region is required for suppression of RNA silencing. The N-terminus is involved in homodimerization. The alpha2 helices of the dimer bind parallel to the stem of the dsRNA helix.</text>
</comment>
<comment type="miscellaneous">
    <text>Encoded on a subgenomic RNA (RNA3) synthesized during replication and which is co-terminal with RNA1.</text>
</comment>
<comment type="similarity">
    <text evidence="3">Belongs to the nodaviridae B2 protein family.</text>
</comment>
<dbReference type="EMBL" id="M33065">
    <property type="protein sequence ID" value="AAA42746.1"/>
    <property type="molecule type" value="Genomic_RNA"/>
</dbReference>
<dbReference type="EMBL" id="X02396">
    <property type="protein sequence ID" value="CAA26240.1"/>
    <property type="molecule type" value="Genomic_RNA"/>
</dbReference>
<dbReference type="PIR" id="B23243">
    <property type="entry name" value="QQBBB2"/>
</dbReference>
<dbReference type="RefSeq" id="YP_227598.1">
    <property type="nucleotide sequence ID" value="NC_001411.2"/>
</dbReference>
<dbReference type="SMR" id="P68830"/>
<dbReference type="KEGG" id="vg:956651"/>
<dbReference type="OrthoDB" id="24098at10239"/>
<dbReference type="Proteomes" id="UP000203003">
    <property type="component" value="Genome"/>
</dbReference>
<dbReference type="GO" id="GO:0033650">
    <property type="term" value="C:host cell mitochondrion"/>
    <property type="evidence" value="ECO:0007669"/>
    <property type="project" value="UniProtKB-SubCell"/>
</dbReference>
<dbReference type="GO" id="GO:0003723">
    <property type="term" value="F:RNA binding"/>
    <property type="evidence" value="ECO:0007669"/>
    <property type="project" value="UniProtKB-KW"/>
</dbReference>
<dbReference type="GO" id="GO:0052170">
    <property type="term" value="P:symbiont-mediated suppression of host innate immune response"/>
    <property type="evidence" value="ECO:0007669"/>
    <property type="project" value="UniProtKB-KW"/>
</dbReference>
<dbReference type="Gene3D" id="1.10.287.1060">
    <property type="entry name" value="ESAT-6-like"/>
    <property type="match status" value="1"/>
</dbReference>
<dbReference type="InterPro" id="IPR024377">
    <property type="entry name" value="RNA-bd_B2"/>
</dbReference>
<dbReference type="InterPro" id="IPR037209">
    <property type="entry name" value="RNA-bd_B2_sf"/>
</dbReference>
<dbReference type="Pfam" id="PF11473">
    <property type="entry name" value="B2"/>
    <property type="match status" value="1"/>
</dbReference>
<dbReference type="SUPFAM" id="SSF140506">
    <property type="entry name" value="FHV B2 protein-like"/>
    <property type="match status" value="1"/>
</dbReference>
<gene>
    <name type="primary">B2</name>
</gene>
<feature type="chain" id="PRO_0000222453" description="Protein B2">
    <location>
        <begin position="1"/>
        <end position="106"/>
    </location>
</feature>
<feature type="region of interest" description="RNA-binding" evidence="1">
    <location>
        <begin position="1"/>
        <end position="73"/>
    </location>
</feature>
<feature type="sequence conflict" description="In Ref. 1; AAA42746." evidence="3" ref="1">
    <original>R</original>
    <variation>P</variation>
    <location>
        <position position="14"/>
    </location>
</feature>
<organism>
    <name type="scientific">Black beetle virus</name>
    <name type="common">BBV</name>
    <dbReference type="NCBI Taxonomy" id="12285"/>
    <lineage>
        <taxon>Viruses</taxon>
        <taxon>Riboviria</taxon>
        <taxon>Orthornavirae</taxon>
        <taxon>Kitrinoviricota</taxon>
        <taxon>Magsaviricetes</taxon>
        <taxon>Nodamuvirales</taxon>
        <taxon>Nodaviridae</taxon>
        <taxon>Alphanodavirus</taxon>
    </lineage>
</organism>
<reference key="1">
    <citation type="journal article" date="1984" name="Virology">
        <title>Sequence of the black beetle virus subgenomic RNA and its location in the viral genome.</title>
        <authorList>
            <person name="Guarino L.A."/>
            <person name="Ghosh A."/>
            <person name="Dasmahapatra B."/>
            <person name="Dasgupta R."/>
            <person name="Kaesberg P."/>
        </authorList>
    </citation>
    <scope>NUCLEOTIDE SEQUENCE [GENOMIC RNA]</scope>
</reference>
<reference key="2">
    <citation type="journal article" date="1985" name="J. Mol. Biol.">
        <title>Structure of the black beetle virus genome and its functional implications.</title>
        <authorList>
            <person name="Dasmahapatra B."/>
            <person name="Dasgupta R."/>
            <person name="Ghosh A."/>
            <person name="Kaesberg P."/>
        </authorList>
    </citation>
    <scope>NUCLEOTIDE SEQUENCE [GENOMIC RNA]</scope>
</reference>
<keyword id="KW-1045">Host mitochondrion</keyword>
<keyword id="KW-0945">Host-virus interaction</keyword>
<keyword id="KW-1090">Inhibition of host innate immune response by virus</keyword>
<keyword id="KW-0694">RNA-binding</keyword>
<keyword id="KW-0941">Suppressor of RNA silencing</keyword>
<keyword id="KW-0899">Viral immunoevasion</keyword>
<name>B2_BBV</name>